<proteinExistence type="inferred from homology"/>
<keyword id="KW-0378">Hydrolase</keyword>
<keyword id="KW-0441">Lipid A biosynthesis</keyword>
<keyword id="KW-0444">Lipid biosynthesis</keyword>
<keyword id="KW-0443">Lipid metabolism</keyword>
<keyword id="KW-0479">Metal-binding</keyword>
<keyword id="KW-1185">Reference proteome</keyword>
<keyword id="KW-0862">Zinc</keyword>
<dbReference type="EC" id="3.5.1.108" evidence="1"/>
<dbReference type="EMBL" id="CP000880">
    <property type="protein sequence ID" value="ABX22714.1"/>
    <property type="molecule type" value="Genomic_DNA"/>
</dbReference>
<dbReference type="BMRB" id="A9MQB6"/>
<dbReference type="SMR" id="A9MQB6"/>
<dbReference type="STRING" id="41514.SARI_02867"/>
<dbReference type="KEGG" id="ses:SARI_02867"/>
<dbReference type="HOGENOM" id="CLU_046528_1_0_6"/>
<dbReference type="UniPathway" id="UPA00359">
    <property type="reaction ID" value="UER00478"/>
</dbReference>
<dbReference type="Proteomes" id="UP000002084">
    <property type="component" value="Chromosome"/>
</dbReference>
<dbReference type="GO" id="GO:0016020">
    <property type="term" value="C:membrane"/>
    <property type="evidence" value="ECO:0007669"/>
    <property type="project" value="GOC"/>
</dbReference>
<dbReference type="GO" id="GO:0046872">
    <property type="term" value="F:metal ion binding"/>
    <property type="evidence" value="ECO:0007669"/>
    <property type="project" value="UniProtKB-KW"/>
</dbReference>
<dbReference type="GO" id="GO:0103117">
    <property type="term" value="F:UDP-3-O-acyl-N-acetylglucosamine deacetylase activity"/>
    <property type="evidence" value="ECO:0007669"/>
    <property type="project" value="UniProtKB-UniRule"/>
</dbReference>
<dbReference type="GO" id="GO:0009245">
    <property type="term" value="P:lipid A biosynthetic process"/>
    <property type="evidence" value="ECO:0007669"/>
    <property type="project" value="UniProtKB-UniRule"/>
</dbReference>
<dbReference type="FunFam" id="3.30.1700.10:FF:000001">
    <property type="entry name" value="UDP-3-O-acyl-N-acetylglucosamine deacetylase"/>
    <property type="match status" value="1"/>
</dbReference>
<dbReference type="FunFam" id="3.30.230.20:FF:000001">
    <property type="entry name" value="UDP-3-O-acyl-N-acetylglucosamine deacetylase"/>
    <property type="match status" value="1"/>
</dbReference>
<dbReference type="Gene3D" id="3.30.230.20">
    <property type="entry name" value="lpxc deacetylase, domain 1"/>
    <property type="match status" value="1"/>
</dbReference>
<dbReference type="Gene3D" id="3.30.1700.10">
    <property type="entry name" value="lpxc deacetylase, domain 2"/>
    <property type="match status" value="1"/>
</dbReference>
<dbReference type="HAMAP" id="MF_00388">
    <property type="entry name" value="LpxC"/>
    <property type="match status" value="1"/>
</dbReference>
<dbReference type="InterPro" id="IPR020568">
    <property type="entry name" value="Ribosomal_Su5_D2-typ_SF"/>
</dbReference>
<dbReference type="InterPro" id="IPR004463">
    <property type="entry name" value="UDP-acyl_GlcNac_deAcase"/>
</dbReference>
<dbReference type="InterPro" id="IPR011334">
    <property type="entry name" value="UDP-acyl_GlcNac_deAcase_C"/>
</dbReference>
<dbReference type="InterPro" id="IPR015870">
    <property type="entry name" value="UDP-acyl_N-AcGlcN_deAcase_N"/>
</dbReference>
<dbReference type="NCBIfam" id="TIGR00325">
    <property type="entry name" value="lpxC"/>
    <property type="match status" value="1"/>
</dbReference>
<dbReference type="PANTHER" id="PTHR33694">
    <property type="entry name" value="UDP-3-O-ACYL-N-ACETYLGLUCOSAMINE DEACETYLASE 1, MITOCHONDRIAL-RELATED"/>
    <property type="match status" value="1"/>
</dbReference>
<dbReference type="PANTHER" id="PTHR33694:SF1">
    <property type="entry name" value="UDP-3-O-ACYL-N-ACETYLGLUCOSAMINE DEACETYLASE 1, MITOCHONDRIAL-RELATED"/>
    <property type="match status" value="1"/>
</dbReference>
<dbReference type="Pfam" id="PF03331">
    <property type="entry name" value="LpxC"/>
    <property type="match status" value="1"/>
</dbReference>
<dbReference type="SUPFAM" id="SSF54211">
    <property type="entry name" value="Ribosomal protein S5 domain 2-like"/>
    <property type="match status" value="2"/>
</dbReference>
<sequence>MIKQRTLKRIVQATGVGLHTGKKVTLTLRPAPANTGVIYRRTDLNPPVDFPADAKSVRDTMLCTCLVNEHDVRISTVEHLNAALAGLGIDNIVIEVNAPEIPIMDGSAAPFVYLLLDAGIDELNCAKKFVRIKETVRVEDGDKWAEFRPYNGFTLDFTIDFNHPAIDSSSQRYAMNFSADAFMRQISRARTFGFMRDIEYLQSRGLCLGGSFDCAIVVDDYRVLNEDGLRFEDEFVRHKMLDAIGDLFMCGHNIIGAFTAYKSGHALNNKLLQAVLANQEAWEFVTFQDDAELPLAFKAPSTVLA</sequence>
<accession>A9MQB6</accession>
<protein>
    <recommendedName>
        <fullName evidence="1">UDP-3-O-acyl-N-acetylglucosamine deacetylase</fullName>
        <shortName evidence="1">UDP-3-O-acyl-GlcNAc deacetylase</shortName>
        <ecNumber evidence="1">3.5.1.108</ecNumber>
    </recommendedName>
    <alternativeName>
        <fullName evidence="1">UDP-3-O-[R-3-hydroxymyristoyl]-N-acetylglucosamine deacetylase</fullName>
    </alternativeName>
</protein>
<name>LPXC_SALAR</name>
<reference key="1">
    <citation type="submission" date="2007-11" db="EMBL/GenBank/DDBJ databases">
        <authorList>
            <consortium name="The Salmonella enterica serovar Arizonae Genome Sequencing Project"/>
            <person name="McClelland M."/>
            <person name="Sanderson E.K."/>
            <person name="Porwollik S."/>
            <person name="Spieth J."/>
            <person name="Clifton W.S."/>
            <person name="Fulton R."/>
            <person name="Chunyan W."/>
            <person name="Wollam A."/>
            <person name="Shah N."/>
            <person name="Pepin K."/>
            <person name="Bhonagiri V."/>
            <person name="Nash W."/>
            <person name="Johnson M."/>
            <person name="Thiruvilangam P."/>
            <person name="Wilson R."/>
        </authorList>
    </citation>
    <scope>NUCLEOTIDE SEQUENCE [LARGE SCALE GENOMIC DNA]</scope>
    <source>
        <strain>ATCC BAA-731 / CDC346-86 / RSK2980</strain>
    </source>
</reference>
<gene>
    <name evidence="1" type="primary">lpxC</name>
    <name type="ordered locus">SARI_02867</name>
</gene>
<organism>
    <name type="scientific">Salmonella arizonae (strain ATCC BAA-731 / CDC346-86 / RSK2980)</name>
    <dbReference type="NCBI Taxonomy" id="41514"/>
    <lineage>
        <taxon>Bacteria</taxon>
        <taxon>Pseudomonadati</taxon>
        <taxon>Pseudomonadota</taxon>
        <taxon>Gammaproteobacteria</taxon>
        <taxon>Enterobacterales</taxon>
        <taxon>Enterobacteriaceae</taxon>
        <taxon>Salmonella</taxon>
    </lineage>
</organism>
<comment type="function">
    <text evidence="1">Catalyzes the hydrolysis of UDP-3-O-myristoyl-N-acetylglucosamine to form UDP-3-O-myristoylglucosamine and acetate, the committed step in lipid A biosynthesis.</text>
</comment>
<comment type="catalytic activity">
    <reaction evidence="1">
        <text>a UDP-3-O-[(3R)-3-hydroxyacyl]-N-acetyl-alpha-D-glucosamine + H2O = a UDP-3-O-[(3R)-3-hydroxyacyl]-alpha-D-glucosamine + acetate</text>
        <dbReference type="Rhea" id="RHEA:67816"/>
        <dbReference type="ChEBI" id="CHEBI:15377"/>
        <dbReference type="ChEBI" id="CHEBI:30089"/>
        <dbReference type="ChEBI" id="CHEBI:137740"/>
        <dbReference type="ChEBI" id="CHEBI:173225"/>
        <dbReference type="EC" id="3.5.1.108"/>
    </reaction>
</comment>
<comment type="cofactor">
    <cofactor evidence="1">
        <name>Zn(2+)</name>
        <dbReference type="ChEBI" id="CHEBI:29105"/>
    </cofactor>
</comment>
<comment type="pathway">
    <text evidence="1">Glycolipid biosynthesis; lipid IV(A) biosynthesis; lipid IV(A) from (3R)-3-hydroxytetradecanoyl-[acyl-carrier-protein] and UDP-N-acetyl-alpha-D-glucosamine: step 2/6.</text>
</comment>
<comment type="similarity">
    <text evidence="1">Belongs to the LpxC family.</text>
</comment>
<evidence type="ECO:0000255" key="1">
    <source>
        <dbReference type="HAMAP-Rule" id="MF_00388"/>
    </source>
</evidence>
<feature type="chain" id="PRO_1000080225" description="UDP-3-O-acyl-N-acetylglucosamine deacetylase">
    <location>
        <begin position="1"/>
        <end position="305"/>
    </location>
</feature>
<feature type="active site" description="Proton donor" evidence="1">
    <location>
        <position position="265"/>
    </location>
</feature>
<feature type="binding site" evidence="1">
    <location>
        <position position="79"/>
    </location>
    <ligand>
        <name>Zn(2+)</name>
        <dbReference type="ChEBI" id="CHEBI:29105"/>
    </ligand>
</feature>
<feature type="binding site" evidence="1">
    <location>
        <position position="238"/>
    </location>
    <ligand>
        <name>Zn(2+)</name>
        <dbReference type="ChEBI" id="CHEBI:29105"/>
    </ligand>
</feature>
<feature type="binding site" evidence="1">
    <location>
        <position position="242"/>
    </location>
    <ligand>
        <name>Zn(2+)</name>
        <dbReference type="ChEBI" id="CHEBI:29105"/>
    </ligand>
</feature>